<accession>P20799</accession>
<name>NO12A_PEA</name>
<reference key="1">
    <citation type="journal article" date="1990" name="Cell">
        <title>The ENOD12 gene product is involved in the infection process during the pea-Rhizobium interaction.</title>
        <authorList>
            <person name="Scheres B."/>
            <person name="van de Wiel C."/>
            <person name="Zalensky A."/>
            <person name="Horvath B."/>
            <person name="Spaink H."/>
            <person name="van Eck H."/>
            <person name="Zwartkruis F."/>
            <person name="Wolters A.-M."/>
            <person name="Gloudemans T."/>
            <person name="van Kammen A."/>
            <person name="Bisseling T."/>
        </authorList>
    </citation>
    <scope>NUCLEOTIDE SEQUENCE [MRNA]</scope>
    <source>
        <strain>cv. Sparkle</strain>
    </source>
</reference>
<reference key="2">
    <citation type="journal article" date="1995" name="Plant Mol. Biol.">
        <title>A 200 bp region of the pea ENOD12 promoter is sufficient for nodule-specific and nod factor induced expression.</title>
        <authorList>
            <person name="Vijn I."/>
            <person name="Christiansen H."/>
            <person name="Lauridsen P."/>
            <person name="Kardailsky I."/>
            <person name="Quandt H.J."/>
            <person name="Broer I."/>
            <person name="Drenth J."/>
            <person name="Ostergaard Jensen E."/>
            <person name="van Kammen A."/>
            <person name="Bisseling T."/>
        </authorList>
    </citation>
    <scope>NUCLEOTIDE SEQUENCE [GENOMIC DNA]</scope>
    <source>
        <strain>cv. Feltham First</strain>
    </source>
</reference>
<gene>
    <name type="primary">ENOD12A</name>
    <name type="synonym">ENOD12</name>
</gene>
<keyword id="KW-0134">Cell wall</keyword>
<keyword id="KW-0536">Nodulation</keyword>
<keyword id="KW-0677">Repeat</keyword>
<keyword id="KW-0964">Secreted</keyword>
<keyword id="KW-0732">Signal</keyword>
<evidence type="ECO:0000255" key="1"/>
<evidence type="ECO:0000256" key="2">
    <source>
        <dbReference type="SAM" id="MobiDB-lite"/>
    </source>
</evidence>
<evidence type="ECO:0000305" key="3"/>
<organism>
    <name type="scientific">Pisum sativum</name>
    <name type="common">Garden pea</name>
    <name type="synonym">Lathyrus oleraceus</name>
    <dbReference type="NCBI Taxonomy" id="3888"/>
    <lineage>
        <taxon>Eukaryota</taxon>
        <taxon>Viridiplantae</taxon>
        <taxon>Streptophyta</taxon>
        <taxon>Embryophyta</taxon>
        <taxon>Tracheophyta</taxon>
        <taxon>Spermatophyta</taxon>
        <taxon>Magnoliopsida</taxon>
        <taxon>eudicotyledons</taxon>
        <taxon>Gunneridae</taxon>
        <taxon>Pentapetalae</taxon>
        <taxon>rosids</taxon>
        <taxon>fabids</taxon>
        <taxon>Fabales</taxon>
        <taxon>Fabaceae</taxon>
        <taxon>Papilionoideae</taxon>
        <taxon>50 kb inversion clade</taxon>
        <taxon>NPAAA clade</taxon>
        <taxon>Hologalegina</taxon>
        <taxon>IRL clade</taxon>
        <taxon>Fabeae</taxon>
        <taxon>Pisum</taxon>
    </lineage>
</organism>
<feature type="signal peptide" evidence="1">
    <location>
        <begin position="1"/>
        <end position="24"/>
    </location>
</feature>
<feature type="chain" id="PRO_0000019804" description="Early nodulin-12A">
    <location>
        <begin position="25"/>
        <end position="110"/>
    </location>
</feature>
<feature type="repeat" description="1">
    <location>
        <begin position="34"/>
        <end position="38"/>
    </location>
</feature>
<feature type="repeat" description="2">
    <location>
        <begin position="39"/>
        <end position="43"/>
    </location>
</feature>
<feature type="repeat" description="3">
    <location>
        <begin position="44"/>
        <end position="48"/>
    </location>
</feature>
<feature type="repeat" description="4; approximate">
    <location>
        <begin position="49"/>
        <end position="53"/>
    </location>
</feature>
<feature type="repeat" description="5">
    <location>
        <begin position="54"/>
        <end position="58"/>
    </location>
</feature>
<feature type="repeat" description="6; approximate">
    <location>
        <begin position="59"/>
        <end position="63"/>
    </location>
</feature>
<feature type="repeat" description="7">
    <location>
        <begin position="64"/>
        <end position="68"/>
    </location>
</feature>
<feature type="repeat" description="8">
    <location>
        <begin position="69"/>
        <end position="73"/>
    </location>
</feature>
<feature type="repeat" description="9">
    <location>
        <begin position="74"/>
        <end position="78"/>
    </location>
</feature>
<feature type="repeat" description="10">
    <location>
        <begin position="79"/>
        <end position="83"/>
    </location>
</feature>
<feature type="repeat" description="11">
    <location>
        <begin position="84"/>
        <end position="88"/>
    </location>
</feature>
<feature type="region of interest" description="Disordered" evidence="2">
    <location>
        <begin position="31"/>
        <end position="110"/>
    </location>
</feature>
<feature type="region of interest" description="11 X 5 AA approximate tandem repeats of P-P-[VQRH]-[NKH]-[GKE]">
    <location>
        <begin position="34"/>
        <end position="88"/>
    </location>
</feature>
<feature type="compositionally biased region" description="Pro residues" evidence="2">
    <location>
        <begin position="32"/>
        <end position="43"/>
    </location>
</feature>
<feature type="compositionally biased region" description="Basic and acidic residues" evidence="2">
    <location>
        <begin position="45"/>
        <end position="81"/>
    </location>
</feature>
<feature type="compositionally biased region" description="Basic residues" evidence="2">
    <location>
        <begin position="82"/>
        <end position="93"/>
    </location>
</feature>
<feature type="compositionally biased region" description="Basic and acidic residues" evidence="2">
    <location>
        <begin position="101"/>
        <end position="110"/>
    </location>
</feature>
<sequence length="110" mass="12508">MASFFLSSLVLFLAALILVPQGLAQYHLNPVYEPPVNGPPVNKPPQKETPVHKPPQKETPVHKPPQKEPPRHKPPQKEPPRHKPPHKKSHLHVTKPSYGKHPTEEHNIHF</sequence>
<comment type="function">
    <text>Involved in the infection process during the plant-rhizobium interaction.</text>
</comment>
<comment type="subcellular location">
    <subcellularLocation>
        <location evidence="3">Secreted</location>
        <location evidence="3">Cell wall</location>
    </subcellularLocation>
</comment>
<comment type="tissue specificity">
    <text>Root nodules, stem and flower.</text>
</comment>
<comment type="developmental stage">
    <text>Expressed in the second stage of root nodule formation.</text>
</comment>
<comment type="induction">
    <text>By soluble compounds from rhizobium (in cells through which the infection thread is migrating and also in cells that do not yet contain an infection thread).</text>
</comment>
<comment type="similarity">
    <text evidence="3">Belongs to the plant proline-rich protein superfamily. ENOD12 family.</text>
</comment>
<dbReference type="EMBL" id="M60585">
    <property type="protein sequence ID" value="AAA33664.1"/>
    <property type="molecule type" value="mRNA"/>
</dbReference>
<dbReference type="EMBL" id="X81366">
    <property type="protein sequence ID" value="CAA57131.1"/>
    <property type="molecule type" value="Genomic_DNA"/>
</dbReference>
<dbReference type="PIR" id="S59557">
    <property type="entry name" value="S59557"/>
</dbReference>
<dbReference type="SMR" id="P20799"/>
<dbReference type="GO" id="GO:0005576">
    <property type="term" value="C:extracellular region"/>
    <property type="evidence" value="ECO:0007669"/>
    <property type="project" value="UniProtKB-KW"/>
</dbReference>
<dbReference type="GO" id="GO:0009877">
    <property type="term" value="P:nodulation"/>
    <property type="evidence" value="ECO:0007669"/>
    <property type="project" value="UniProtKB-KW"/>
</dbReference>
<dbReference type="InterPro" id="IPR051308">
    <property type="entry name" value="Proline-rich_CW_protein"/>
</dbReference>
<dbReference type="PANTHER" id="PTHR34629">
    <property type="entry name" value="PROLINE-RICH EXTENSIN-LIKE PROTEIN EPR1"/>
    <property type="match status" value="1"/>
</dbReference>
<dbReference type="PANTHER" id="PTHR34629:SF4">
    <property type="entry name" value="REPETITIVE PROLINE-RICH CELL WALL PROTEIN 3"/>
    <property type="match status" value="1"/>
</dbReference>
<protein>
    <recommendedName>
        <fullName>Early nodulin-12A</fullName>
        <shortName>N-12A</shortName>
    </recommendedName>
</protein>
<proteinExistence type="evidence at transcript level"/>